<sequence length="205" mass="22545">MNQQYPSTLLEKAVGEFSKLPGIGRKTAMRLVLHLLRQDTSVVEAFGSSIITLKHEVKYCKVCHNISDTETCQICANPQRDASMVCVVENIRDVMAVEATQQYRGLYHVLGGVISPMDGVGPGDLQIESLVRRVAEGGINEVILALSTTMEGDTTNFYIYRKLEKMGVKLSVLARGVSIGDELEYTDEITLGRSIVNRTTFTGTV</sequence>
<comment type="function">
    <text evidence="1">May play a role in DNA repair. It seems to be involved in an RecBC-independent recombinational process of DNA repair. It may act with RecF and RecO.</text>
</comment>
<comment type="similarity">
    <text evidence="1">Belongs to the RecR family.</text>
</comment>
<organism>
    <name type="scientific">Bacteroides fragilis (strain ATCC 25285 / DSM 2151 / CCUG 4856 / JCM 11019 / LMG 10263 / NCTC 9343 / Onslow / VPI 2553 / EN-2)</name>
    <dbReference type="NCBI Taxonomy" id="272559"/>
    <lineage>
        <taxon>Bacteria</taxon>
        <taxon>Pseudomonadati</taxon>
        <taxon>Bacteroidota</taxon>
        <taxon>Bacteroidia</taxon>
        <taxon>Bacteroidales</taxon>
        <taxon>Bacteroidaceae</taxon>
        <taxon>Bacteroides</taxon>
    </lineage>
</organism>
<reference key="1">
    <citation type="journal article" date="2005" name="Science">
        <title>Extensive DNA inversions in the B. fragilis genome control variable gene expression.</title>
        <authorList>
            <person name="Cerdeno-Tarraga A.-M."/>
            <person name="Patrick S."/>
            <person name="Crossman L.C."/>
            <person name="Blakely G."/>
            <person name="Abratt V."/>
            <person name="Lennard N."/>
            <person name="Poxton I."/>
            <person name="Duerden B."/>
            <person name="Harris B."/>
            <person name="Quail M.A."/>
            <person name="Barron A."/>
            <person name="Clark L."/>
            <person name="Corton C."/>
            <person name="Doggett J."/>
            <person name="Holden M.T.G."/>
            <person name="Larke N."/>
            <person name="Line A."/>
            <person name="Lord A."/>
            <person name="Norbertczak H."/>
            <person name="Ormond D."/>
            <person name="Price C."/>
            <person name="Rabbinowitsch E."/>
            <person name="Woodward J."/>
            <person name="Barrell B.G."/>
            <person name="Parkhill J."/>
        </authorList>
    </citation>
    <scope>NUCLEOTIDE SEQUENCE [LARGE SCALE GENOMIC DNA]</scope>
    <source>
        <strain>ATCC 25285 / DSM 2151 / CCUG 4856 / JCM 11019 / LMG 10263 / NCTC 9343 / Onslow / VPI 2553 / EN-2</strain>
    </source>
</reference>
<name>RECR_BACFN</name>
<feature type="chain" id="PRO_0000190277" description="Recombination protein RecR">
    <location>
        <begin position="1"/>
        <end position="205"/>
    </location>
</feature>
<feature type="domain" description="Toprim" evidence="1">
    <location>
        <begin position="83"/>
        <end position="178"/>
    </location>
</feature>
<feature type="zinc finger region" description="C4-type" evidence="1">
    <location>
        <begin position="60"/>
        <end position="75"/>
    </location>
</feature>
<dbReference type="EMBL" id="CR626927">
    <property type="protein sequence ID" value="CAH07801.1"/>
    <property type="molecule type" value="Genomic_DNA"/>
</dbReference>
<dbReference type="RefSeq" id="WP_005787270.1">
    <property type="nucleotide sequence ID" value="NZ_UFTH01000001.1"/>
</dbReference>
<dbReference type="SMR" id="Q5LDK8"/>
<dbReference type="PaxDb" id="272559-BF9343_2020"/>
<dbReference type="GeneID" id="93103452"/>
<dbReference type="KEGG" id="bfs:BF9343_2020"/>
<dbReference type="eggNOG" id="COG0353">
    <property type="taxonomic scope" value="Bacteria"/>
</dbReference>
<dbReference type="HOGENOM" id="CLU_060739_1_1_10"/>
<dbReference type="Proteomes" id="UP000006731">
    <property type="component" value="Chromosome"/>
</dbReference>
<dbReference type="GO" id="GO:0003677">
    <property type="term" value="F:DNA binding"/>
    <property type="evidence" value="ECO:0007669"/>
    <property type="project" value="UniProtKB-UniRule"/>
</dbReference>
<dbReference type="GO" id="GO:0008270">
    <property type="term" value="F:zinc ion binding"/>
    <property type="evidence" value="ECO:0007669"/>
    <property type="project" value="UniProtKB-KW"/>
</dbReference>
<dbReference type="GO" id="GO:0006310">
    <property type="term" value="P:DNA recombination"/>
    <property type="evidence" value="ECO:0007669"/>
    <property type="project" value="UniProtKB-UniRule"/>
</dbReference>
<dbReference type="GO" id="GO:0006281">
    <property type="term" value="P:DNA repair"/>
    <property type="evidence" value="ECO:0007669"/>
    <property type="project" value="UniProtKB-UniRule"/>
</dbReference>
<dbReference type="CDD" id="cd01025">
    <property type="entry name" value="TOPRIM_recR"/>
    <property type="match status" value="1"/>
</dbReference>
<dbReference type="Gene3D" id="3.30.60.80">
    <property type="match status" value="1"/>
</dbReference>
<dbReference type="Gene3D" id="3.40.1360.10">
    <property type="match status" value="1"/>
</dbReference>
<dbReference type="Gene3D" id="6.10.250.240">
    <property type="match status" value="1"/>
</dbReference>
<dbReference type="Gene3D" id="1.10.8.420">
    <property type="entry name" value="RecR Domain 1"/>
    <property type="match status" value="1"/>
</dbReference>
<dbReference type="HAMAP" id="MF_00017">
    <property type="entry name" value="RecR"/>
    <property type="match status" value="1"/>
</dbReference>
<dbReference type="InterPro" id="IPR000093">
    <property type="entry name" value="DNA_Rcmb_RecR"/>
</dbReference>
<dbReference type="InterPro" id="IPR023627">
    <property type="entry name" value="Rcmb_RecR"/>
</dbReference>
<dbReference type="InterPro" id="IPR015967">
    <property type="entry name" value="Rcmb_RecR_Znf"/>
</dbReference>
<dbReference type="InterPro" id="IPR006171">
    <property type="entry name" value="TOPRIM_dom"/>
</dbReference>
<dbReference type="InterPro" id="IPR034137">
    <property type="entry name" value="TOPRIM_RecR"/>
</dbReference>
<dbReference type="NCBIfam" id="TIGR00615">
    <property type="entry name" value="recR"/>
    <property type="match status" value="1"/>
</dbReference>
<dbReference type="PANTHER" id="PTHR30446">
    <property type="entry name" value="RECOMBINATION PROTEIN RECR"/>
    <property type="match status" value="1"/>
</dbReference>
<dbReference type="PANTHER" id="PTHR30446:SF0">
    <property type="entry name" value="RECOMBINATION PROTEIN RECR"/>
    <property type="match status" value="1"/>
</dbReference>
<dbReference type="Pfam" id="PF21175">
    <property type="entry name" value="RecR_C"/>
    <property type="match status" value="1"/>
</dbReference>
<dbReference type="Pfam" id="PF21176">
    <property type="entry name" value="RecR_HhH"/>
    <property type="match status" value="1"/>
</dbReference>
<dbReference type="Pfam" id="PF02132">
    <property type="entry name" value="RecR_ZnF"/>
    <property type="match status" value="1"/>
</dbReference>
<dbReference type="Pfam" id="PF13662">
    <property type="entry name" value="Toprim_4"/>
    <property type="match status" value="1"/>
</dbReference>
<dbReference type="SMART" id="SM00493">
    <property type="entry name" value="TOPRIM"/>
    <property type="match status" value="1"/>
</dbReference>
<dbReference type="SUPFAM" id="SSF111304">
    <property type="entry name" value="Recombination protein RecR"/>
    <property type="match status" value="1"/>
</dbReference>
<dbReference type="PROSITE" id="PS01300">
    <property type="entry name" value="RECR"/>
    <property type="match status" value="1"/>
</dbReference>
<dbReference type="PROSITE" id="PS50880">
    <property type="entry name" value="TOPRIM"/>
    <property type="match status" value="1"/>
</dbReference>
<accession>Q5LDK8</accession>
<proteinExistence type="inferred from homology"/>
<protein>
    <recommendedName>
        <fullName evidence="1">Recombination protein RecR</fullName>
    </recommendedName>
</protein>
<evidence type="ECO:0000255" key="1">
    <source>
        <dbReference type="HAMAP-Rule" id="MF_00017"/>
    </source>
</evidence>
<gene>
    <name evidence="1" type="primary">recR</name>
    <name type="ordered locus">BF2106</name>
</gene>
<keyword id="KW-0227">DNA damage</keyword>
<keyword id="KW-0233">DNA recombination</keyword>
<keyword id="KW-0234">DNA repair</keyword>
<keyword id="KW-0479">Metal-binding</keyword>
<keyword id="KW-0862">Zinc</keyword>
<keyword id="KW-0863">Zinc-finger</keyword>